<protein>
    <recommendedName>
        <fullName evidence="1">GTPase Obg</fullName>
        <ecNumber evidence="1">3.6.5.-</ecNumber>
    </recommendedName>
    <alternativeName>
        <fullName evidence="1">GTP-binding protein Obg</fullName>
    </alternativeName>
</protein>
<comment type="function">
    <text evidence="1">An essential GTPase which binds GTP, GDP and possibly (p)ppGpp with moderate affinity, with high nucleotide exchange rates and a fairly low GTP hydrolysis rate. Plays a role in control of the cell cycle, stress response, ribosome biogenesis and in those bacteria that undergo differentiation, in morphogenesis control.</text>
</comment>
<comment type="cofactor">
    <cofactor evidence="1">
        <name>Mg(2+)</name>
        <dbReference type="ChEBI" id="CHEBI:18420"/>
    </cofactor>
</comment>
<comment type="subunit">
    <text evidence="1">Monomer.</text>
</comment>
<comment type="subcellular location">
    <subcellularLocation>
        <location evidence="1">Cytoplasm</location>
    </subcellularLocation>
</comment>
<comment type="similarity">
    <text evidence="1">Belongs to the TRAFAC class OBG-HflX-like GTPase superfamily. OBG GTPase family.</text>
</comment>
<sequence>MFRDSAKIYVKAGNGGNGMVSFHREKYIAAGGPDGGDGGKGGDVIFVVDEGLNTLIDFRYKKNFKAEPGQDGGTSNRSGKNGEDLIIKVPLGTVVKDELTDMVLVDLIKPGQTCVIAKGGRGGKGNQHFATPTRQVPNFAKSGDLGEEYSLILEMKMIADVGLVGYPNVGKSTILSMVSAAKPKIANYHFTTLVPNLGVVQIEHGKSFVIADIPGLIEGAHEGVGLGHQFLRHVERTKLLVHVVDVSGVEGRDAVEDFDTINSELQKYNQVLSTRPQIVAANKMDIPGAEENYKAFKEELEKRGYKVFGISAATNKGLKELLYAVSETLKTLPDTILLDETQNEEVVYKVQEEKPFEIHIEDGVYVIEGKWLRKVLGSTNITNYESLQYFQRALKKKGVITALEEMGIQEGDTVRIYDTEFDYTR</sequence>
<gene>
    <name evidence="1" type="primary">obg</name>
    <name type="ordered locus">Ccel_1323</name>
</gene>
<dbReference type="EC" id="3.6.5.-" evidence="1"/>
<dbReference type="EMBL" id="CP001348">
    <property type="protein sequence ID" value="ACL75677.1"/>
    <property type="molecule type" value="Genomic_DNA"/>
</dbReference>
<dbReference type="RefSeq" id="WP_015924825.1">
    <property type="nucleotide sequence ID" value="NC_011898.1"/>
</dbReference>
<dbReference type="SMR" id="B8I179"/>
<dbReference type="STRING" id="394503.Ccel_1323"/>
<dbReference type="KEGG" id="cce:Ccel_1323"/>
<dbReference type="eggNOG" id="COG0536">
    <property type="taxonomic scope" value="Bacteria"/>
</dbReference>
<dbReference type="HOGENOM" id="CLU_011747_2_1_9"/>
<dbReference type="OrthoDB" id="9807318at2"/>
<dbReference type="Proteomes" id="UP000001349">
    <property type="component" value="Chromosome"/>
</dbReference>
<dbReference type="GO" id="GO:0005737">
    <property type="term" value="C:cytoplasm"/>
    <property type="evidence" value="ECO:0007669"/>
    <property type="project" value="UniProtKB-SubCell"/>
</dbReference>
<dbReference type="GO" id="GO:0005525">
    <property type="term" value="F:GTP binding"/>
    <property type="evidence" value="ECO:0007669"/>
    <property type="project" value="UniProtKB-UniRule"/>
</dbReference>
<dbReference type="GO" id="GO:0003924">
    <property type="term" value="F:GTPase activity"/>
    <property type="evidence" value="ECO:0007669"/>
    <property type="project" value="UniProtKB-UniRule"/>
</dbReference>
<dbReference type="GO" id="GO:0000287">
    <property type="term" value="F:magnesium ion binding"/>
    <property type="evidence" value="ECO:0007669"/>
    <property type="project" value="InterPro"/>
</dbReference>
<dbReference type="GO" id="GO:0042254">
    <property type="term" value="P:ribosome biogenesis"/>
    <property type="evidence" value="ECO:0007669"/>
    <property type="project" value="UniProtKB-UniRule"/>
</dbReference>
<dbReference type="CDD" id="cd01898">
    <property type="entry name" value="Obg"/>
    <property type="match status" value="1"/>
</dbReference>
<dbReference type="FunFam" id="2.70.210.12:FF:000001">
    <property type="entry name" value="GTPase Obg"/>
    <property type="match status" value="1"/>
</dbReference>
<dbReference type="FunFam" id="3.40.50.300:FF:000515">
    <property type="entry name" value="GTPase Obg"/>
    <property type="match status" value="1"/>
</dbReference>
<dbReference type="Gene3D" id="3.30.300.350">
    <property type="entry name" value="GTP-binding protein OBG, C-terminal domain"/>
    <property type="match status" value="1"/>
</dbReference>
<dbReference type="Gene3D" id="2.70.210.12">
    <property type="entry name" value="GTP1/OBG domain"/>
    <property type="match status" value="1"/>
</dbReference>
<dbReference type="Gene3D" id="3.40.50.300">
    <property type="entry name" value="P-loop containing nucleotide triphosphate hydrolases"/>
    <property type="match status" value="1"/>
</dbReference>
<dbReference type="HAMAP" id="MF_01454">
    <property type="entry name" value="GTPase_Obg"/>
    <property type="match status" value="1"/>
</dbReference>
<dbReference type="InterPro" id="IPR031167">
    <property type="entry name" value="G_OBG"/>
</dbReference>
<dbReference type="InterPro" id="IPR006073">
    <property type="entry name" value="GTP-bd"/>
</dbReference>
<dbReference type="InterPro" id="IPR014100">
    <property type="entry name" value="GTP-bd_Obg/CgtA"/>
</dbReference>
<dbReference type="InterPro" id="IPR036346">
    <property type="entry name" value="GTP-bd_prot_GTP1/OBG_C_sf"/>
</dbReference>
<dbReference type="InterPro" id="IPR006074">
    <property type="entry name" value="GTP1-OBG_CS"/>
</dbReference>
<dbReference type="InterPro" id="IPR006169">
    <property type="entry name" value="GTP1_OBG_dom"/>
</dbReference>
<dbReference type="InterPro" id="IPR036726">
    <property type="entry name" value="GTP1_OBG_dom_sf"/>
</dbReference>
<dbReference type="InterPro" id="IPR045086">
    <property type="entry name" value="OBG_GTPase"/>
</dbReference>
<dbReference type="InterPro" id="IPR015349">
    <property type="entry name" value="OCT_dom"/>
</dbReference>
<dbReference type="InterPro" id="IPR027417">
    <property type="entry name" value="P-loop_NTPase"/>
</dbReference>
<dbReference type="NCBIfam" id="TIGR02729">
    <property type="entry name" value="Obg_CgtA"/>
    <property type="match status" value="1"/>
</dbReference>
<dbReference type="NCBIfam" id="TIGR03595">
    <property type="entry name" value="Obg_CgtA_exten"/>
    <property type="match status" value="1"/>
</dbReference>
<dbReference type="NCBIfam" id="NF008954">
    <property type="entry name" value="PRK12296.1"/>
    <property type="match status" value="1"/>
</dbReference>
<dbReference type="NCBIfam" id="NF008955">
    <property type="entry name" value="PRK12297.1"/>
    <property type="match status" value="1"/>
</dbReference>
<dbReference type="NCBIfam" id="NF008956">
    <property type="entry name" value="PRK12299.1"/>
    <property type="match status" value="1"/>
</dbReference>
<dbReference type="PANTHER" id="PTHR11702">
    <property type="entry name" value="DEVELOPMENTALLY REGULATED GTP-BINDING PROTEIN-RELATED"/>
    <property type="match status" value="1"/>
</dbReference>
<dbReference type="PANTHER" id="PTHR11702:SF31">
    <property type="entry name" value="MITOCHONDRIAL RIBOSOME-ASSOCIATED GTPASE 2"/>
    <property type="match status" value="1"/>
</dbReference>
<dbReference type="Pfam" id="PF09269">
    <property type="entry name" value="DUF1967"/>
    <property type="match status" value="1"/>
</dbReference>
<dbReference type="Pfam" id="PF01018">
    <property type="entry name" value="GTP1_OBG"/>
    <property type="match status" value="1"/>
</dbReference>
<dbReference type="Pfam" id="PF01926">
    <property type="entry name" value="MMR_HSR1"/>
    <property type="match status" value="1"/>
</dbReference>
<dbReference type="PIRSF" id="PIRSF002401">
    <property type="entry name" value="GTP_bd_Obg/CgtA"/>
    <property type="match status" value="1"/>
</dbReference>
<dbReference type="PRINTS" id="PR00326">
    <property type="entry name" value="GTP1OBG"/>
</dbReference>
<dbReference type="SUPFAM" id="SSF102741">
    <property type="entry name" value="Obg GTP-binding protein C-terminal domain"/>
    <property type="match status" value="1"/>
</dbReference>
<dbReference type="SUPFAM" id="SSF82051">
    <property type="entry name" value="Obg GTP-binding protein N-terminal domain"/>
    <property type="match status" value="1"/>
</dbReference>
<dbReference type="SUPFAM" id="SSF52540">
    <property type="entry name" value="P-loop containing nucleoside triphosphate hydrolases"/>
    <property type="match status" value="1"/>
</dbReference>
<dbReference type="PROSITE" id="PS51710">
    <property type="entry name" value="G_OBG"/>
    <property type="match status" value="1"/>
</dbReference>
<dbReference type="PROSITE" id="PS00905">
    <property type="entry name" value="GTP1_OBG"/>
    <property type="match status" value="1"/>
</dbReference>
<dbReference type="PROSITE" id="PS51883">
    <property type="entry name" value="OBG"/>
    <property type="match status" value="1"/>
</dbReference>
<dbReference type="PROSITE" id="PS51881">
    <property type="entry name" value="OCT"/>
    <property type="match status" value="1"/>
</dbReference>
<evidence type="ECO:0000255" key="1">
    <source>
        <dbReference type="HAMAP-Rule" id="MF_01454"/>
    </source>
</evidence>
<evidence type="ECO:0000255" key="2">
    <source>
        <dbReference type="PROSITE-ProRule" id="PRU01229"/>
    </source>
</evidence>
<evidence type="ECO:0000255" key="3">
    <source>
        <dbReference type="PROSITE-ProRule" id="PRU01231"/>
    </source>
</evidence>
<organism>
    <name type="scientific">Ruminiclostridium cellulolyticum (strain ATCC 35319 / DSM 5812 / JCM 6584 / H10)</name>
    <name type="common">Clostridium cellulolyticum</name>
    <dbReference type="NCBI Taxonomy" id="394503"/>
    <lineage>
        <taxon>Bacteria</taxon>
        <taxon>Bacillati</taxon>
        <taxon>Bacillota</taxon>
        <taxon>Clostridia</taxon>
        <taxon>Eubacteriales</taxon>
        <taxon>Oscillospiraceae</taxon>
        <taxon>Ruminiclostridium</taxon>
    </lineage>
</organism>
<keyword id="KW-0963">Cytoplasm</keyword>
<keyword id="KW-0342">GTP-binding</keyword>
<keyword id="KW-0378">Hydrolase</keyword>
<keyword id="KW-0460">Magnesium</keyword>
<keyword id="KW-0479">Metal-binding</keyword>
<keyword id="KW-0547">Nucleotide-binding</keyword>
<keyword id="KW-1185">Reference proteome</keyword>
<name>OBG_RUMCH</name>
<proteinExistence type="inferred from homology"/>
<reference key="1">
    <citation type="submission" date="2009-01" db="EMBL/GenBank/DDBJ databases">
        <title>Complete sequence of Clostridium cellulolyticum H10.</title>
        <authorList>
            <consortium name="US DOE Joint Genome Institute"/>
            <person name="Lucas S."/>
            <person name="Copeland A."/>
            <person name="Lapidus A."/>
            <person name="Glavina del Rio T."/>
            <person name="Dalin E."/>
            <person name="Tice H."/>
            <person name="Bruce D."/>
            <person name="Goodwin L."/>
            <person name="Pitluck S."/>
            <person name="Chertkov O."/>
            <person name="Saunders E."/>
            <person name="Brettin T."/>
            <person name="Detter J.C."/>
            <person name="Han C."/>
            <person name="Larimer F."/>
            <person name="Land M."/>
            <person name="Hauser L."/>
            <person name="Kyrpides N."/>
            <person name="Ivanova N."/>
            <person name="Zhou J."/>
            <person name="Richardson P."/>
        </authorList>
    </citation>
    <scope>NUCLEOTIDE SEQUENCE [LARGE SCALE GENOMIC DNA]</scope>
    <source>
        <strain>ATCC 35319 / DSM 5812 / JCM 6584 / H10</strain>
    </source>
</reference>
<accession>B8I179</accession>
<feature type="chain" id="PRO_0000385846" description="GTPase Obg">
    <location>
        <begin position="1"/>
        <end position="425"/>
    </location>
</feature>
<feature type="domain" description="Obg" evidence="3">
    <location>
        <begin position="1"/>
        <end position="158"/>
    </location>
</feature>
<feature type="domain" description="OBG-type G" evidence="1">
    <location>
        <begin position="159"/>
        <end position="330"/>
    </location>
</feature>
<feature type="domain" description="OCT" evidence="2">
    <location>
        <begin position="348"/>
        <end position="425"/>
    </location>
</feature>
<feature type="binding site" evidence="1">
    <location>
        <begin position="165"/>
        <end position="172"/>
    </location>
    <ligand>
        <name>GTP</name>
        <dbReference type="ChEBI" id="CHEBI:37565"/>
    </ligand>
</feature>
<feature type="binding site" evidence="1">
    <location>
        <position position="172"/>
    </location>
    <ligand>
        <name>Mg(2+)</name>
        <dbReference type="ChEBI" id="CHEBI:18420"/>
    </ligand>
</feature>
<feature type="binding site" evidence="1">
    <location>
        <begin position="190"/>
        <end position="194"/>
    </location>
    <ligand>
        <name>GTP</name>
        <dbReference type="ChEBI" id="CHEBI:37565"/>
    </ligand>
</feature>
<feature type="binding site" evidence="1">
    <location>
        <position position="192"/>
    </location>
    <ligand>
        <name>Mg(2+)</name>
        <dbReference type="ChEBI" id="CHEBI:18420"/>
    </ligand>
</feature>
<feature type="binding site" evidence="1">
    <location>
        <begin position="212"/>
        <end position="215"/>
    </location>
    <ligand>
        <name>GTP</name>
        <dbReference type="ChEBI" id="CHEBI:37565"/>
    </ligand>
</feature>
<feature type="binding site" evidence="1">
    <location>
        <begin position="282"/>
        <end position="285"/>
    </location>
    <ligand>
        <name>GTP</name>
        <dbReference type="ChEBI" id="CHEBI:37565"/>
    </ligand>
</feature>
<feature type="binding site" evidence="1">
    <location>
        <begin position="311"/>
        <end position="313"/>
    </location>
    <ligand>
        <name>GTP</name>
        <dbReference type="ChEBI" id="CHEBI:37565"/>
    </ligand>
</feature>